<comment type="function">
    <text evidence="2">Transaldolase is important for the balance of metabolites in the pentose-phosphate pathway. Does not show fructose-6-P aldolase activity.</text>
</comment>
<comment type="catalytic activity">
    <reaction evidence="2">
        <text>D-sedoheptulose 7-phosphate + D-glyceraldehyde 3-phosphate = D-erythrose 4-phosphate + beta-D-fructose 6-phosphate</text>
        <dbReference type="Rhea" id="RHEA:17053"/>
        <dbReference type="ChEBI" id="CHEBI:16897"/>
        <dbReference type="ChEBI" id="CHEBI:57483"/>
        <dbReference type="ChEBI" id="CHEBI:57634"/>
        <dbReference type="ChEBI" id="CHEBI:59776"/>
        <dbReference type="EC" id="2.2.1.2"/>
    </reaction>
</comment>
<comment type="pathway">
    <text>Carbohydrate degradation; pentose phosphate pathway; D-glyceraldehyde 3-phosphate and beta-D-fructose 6-phosphate from D-ribose 5-phosphate and D-xylulose 5-phosphate (non-oxidative stage): step 2/3.</text>
</comment>
<comment type="subcellular location">
    <subcellularLocation>
        <location evidence="3">Cytoplasm</location>
    </subcellularLocation>
</comment>
<comment type="similarity">
    <text evidence="3">Belongs to the transaldolase family. Type 3B subfamily.</text>
</comment>
<reference key="1">
    <citation type="journal article" date="1999" name="Nature">
        <title>Evidence for lateral gene transfer between Archaea and Bacteria from genome sequence of Thermotoga maritima.</title>
        <authorList>
            <person name="Nelson K.E."/>
            <person name="Clayton R.A."/>
            <person name="Gill S.R."/>
            <person name="Gwinn M.L."/>
            <person name="Dodson R.J."/>
            <person name="Haft D.H."/>
            <person name="Hickey E.K."/>
            <person name="Peterson J.D."/>
            <person name="Nelson W.C."/>
            <person name="Ketchum K.A."/>
            <person name="McDonald L.A."/>
            <person name="Utterback T.R."/>
            <person name="Malek J.A."/>
            <person name="Linher K.D."/>
            <person name="Garrett M.M."/>
            <person name="Stewart A.M."/>
            <person name="Cotton M.D."/>
            <person name="Pratt M.S."/>
            <person name="Phillips C.A."/>
            <person name="Richardson D.L."/>
            <person name="Heidelberg J.F."/>
            <person name="Sutton G.G."/>
            <person name="Fleischmann R.D."/>
            <person name="Eisen J.A."/>
            <person name="White O."/>
            <person name="Salzberg S.L."/>
            <person name="Smith H.O."/>
            <person name="Venter J.C."/>
            <person name="Fraser C.M."/>
        </authorList>
    </citation>
    <scope>NUCLEOTIDE SEQUENCE [LARGE SCALE GENOMIC DNA]</scope>
    <source>
        <strain>ATCC 43589 / DSM 3109 / JCM 10099 / NBRC 100826 / MSB8</strain>
    </source>
</reference>
<reference key="2">
    <citation type="journal article" date="2001" name="J. Biol. Chem.">
        <title>Fructose-6-phosphate aldolase is a novel class I aldolase from Escherichia coli and is related to a novel group of bacterial transaldolases.</title>
        <authorList>
            <person name="Schuermann M."/>
            <person name="Sprenger G.A."/>
        </authorList>
    </citation>
    <scope>FUNCTION</scope>
    <scope>CATALYTIC ACTIVITY</scope>
</reference>
<feature type="chain" id="PRO_0000173687" description="Transaldolase">
    <location>
        <begin position="1"/>
        <end position="218"/>
    </location>
</feature>
<feature type="active site" description="Schiff-base intermediate with substrate" evidence="1">
    <location>
        <position position="83"/>
    </location>
</feature>
<feature type="strand" evidence="4">
    <location>
        <begin position="2"/>
        <end position="6"/>
    </location>
</feature>
<feature type="helix" evidence="4">
    <location>
        <begin position="10"/>
        <end position="18"/>
    </location>
</feature>
<feature type="strand" evidence="4">
    <location>
        <begin position="24"/>
        <end position="26"/>
    </location>
</feature>
<feature type="helix" evidence="4">
    <location>
        <begin position="30"/>
        <end position="34"/>
    </location>
</feature>
<feature type="helix" evidence="4">
    <location>
        <begin position="42"/>
        <end position="50"/>
    </location>
</feature>
<feature type="strand" evidence="4">
    <location>
        <begin position="54"/>
        <end position="57"/>
    </location>
</feature>
<feature type="helix" evidence="4">
    <location>
        <begin position="63"/>
        <end position="74"/>
    </location>
</feature>
<feature type="strand" evidence="4">
    <location>
        <begin position="80"/>
        <end position="87"/>
    </location>
</feature>
<feature type="helix" evidence="4">
    <location>
        <begin position="88"/>
        <end position="99"/>
    </location>
</feature>
<feature type="strand" evidence="4">
    <location>
        <begin position="104"/>
        <end position="109"/>
    </location>
</feature>
<feature type="helix" evidence="4">
    <location>
        <begin position="112"/>
        <end position="121"/>
    </location>
</feature>
<feature type="strand" evidence="4">
    <location>
        <begin position="124"/>
        <end position="129"/>
    </location>
</feature>
<feature type="helix" evidence="4">
    <location>
        <begin position="130"/>
        <end position="135"/>
    </location>
</feature>
<feature type="helix" evidence="4">
    <location>
        <begin position="140"/>
        <end position="154"/>
    </location>
</feature>
<feature type="strand" evidence="4">
    <location>
        <begin position="159"/>
        <end position="164"/>
    </location>
</feature>
<feature type="helix" evidence="4">
    <location>
        <begin position="168"/>
        <end position="177"/>
    </location>
</feature>
<feature type="strand" evidence="4">
    <location>
        <begin position="180"/>
        <end position="184"/>
    </location>
</feature>
<feature type="helix" evidence="4">
    <location>
        <begin position="186"/>
        <end position="192"/>
    </location>
</feature>
<feature type="helix" evidence="4">
    <location>
        <begin position="196"/>
        <end position="214"/>
    </location>
</feature>
<evidence type="ECO:0000250" key="1"/>
<evidence type="ECO:0000269" key="2">
    <source>
    </source>
</evidence>
<evidence type="ECO:0000305" key="3"/>
<evidence type="ECO:0007829" key="4">
    <source>
        <dbReference type="PDB" id="1VPX"/>
    </source>
</evidence>
<keyword id="KW-0002">3D-structure</keyword>
<keyword id="KW-0963">Cytoplasm</keyword>
<keyword id="KW-0570">Pentose shunt</keyword>
<keyword id="KW-1185">Reference proteome</keyword>
<keyword id="KW-0704">Schiff base</keyword>
<keyword id="KW-0808">Transferase</keyword>
<protein>
    <recommendedName>
        <fullName>Transaldolase</fullName>
        <ecNumber>2.2.1.2</ecNumber>
    </recommendedName>
</protein>
<dbReference type="EC" id="2.2.1.2"/>
<dbReference type="EMBL" id="AE000512">
    <property type="protein sequence ID" value="AAD35383.1"/>
    <property type="molecule type" value="Genomic_DNA"/>
</dbReference>
<dbReference type="PIR" id="G72394">
    <property type="entry name" value="G72394"/>
</dbReference>
<dbReference type="RefSeq" id="NP_228107.1">
    <property type="nucleotide sequence ID" value="NC_000853.1"/>
</dbReference>
<dbReference type="PDB" id="1VPX">
    <property type="method" value="X-ray"/>
    <property type="resolution" value="2.40 A"/>
    <property type="chains" value="A/B/C/D/E/F/G/H/I/J/K/L/M/N/O/P/Q/R/S/T=1-218"/>
</dbReference>
<dbReference type="PDBsum" id="1VPX"/>
<dbReference type="SMR" id="Q9WYD1"/>
<dbReference type="FunCoup" id="Q9WYD1">
    <property type="interactions" value="235"/>
</dbReference>
<dbReference type="STRING" id="243274.TM_0295"/>
<dbReference type="PaxDb" id="243274-THEMA_03250"/>
<dbReference type="EnsemblBacteria" id="AAD35383">
    <property type="protein sequence ID" value="AAD35383"/>
    <property type="gene ID" value="TM_0295"/>
</dbReference>
<dbReference type="KEGG" id="tma:TM0295"/>
<dbReference type="KEGG" id="tmi:THEMA_03250"/>
<dbReference type="KEGG" id="tmm:Tmari_0293"/>
<dbReference type="KEGG" id="tmw:THMA_0302"/>
<dbReference type="eggNOG" id="COG0176">
    <property type="taxonomic scope" value="Bacteria"/>
</dbReference>
<dbReference type="InParanoid" id="Q9WYD1"/>
<dbReference type="OrthoDB" id="9807051at2"/>
<dbReference type="BRENDA" id="2.2.1.2">
    <property type="organism ID" value="6331"/>
</dbReference>
<dbReference type="UniPathway" id="UPA00115">
    <property type="reaction ID" value="UER00414"/>
</dbReference>
<dbReference type="EvolutionaryTrace" id="Q9WYD1"/>
<dbReference type="Proteomes" id="UP000008183">
    <property type="component" value="Chromosome"/>
</dbReference>
<dbReference type="GO" id="GO:0005737">
    <property type="term" value="C:cytoplasm"/>
    <property type="evidence" value="ECO:0007669"/>
    <property type="project" value="UniProtKB-SubCell"/>
</dbReference>
<dbReference type="GO" id="GO:0016832">
    <property type="term" value="F:aldehyde-lyase activity"/>
    <property type="evidence" value="ECO:0007669"/>
    <property type="project" value="InterPro"/>
</dbReference>
<dbReference type="GO" id="GO:0004801">
    <property type="term" value="F:transaldolase activity"/>
    <property type="evidence" value="ECO:0007669"/>
    <property type="project" value="UniProtKB-UniRule"/>
</dbReference>
<dbReference type="GO" id="GO:0005975">
    <property type="term" value="P:carbohydrate metabolic process"/>
    <property type="evidence" value="ECO:0007669"/>
    <property type="project" value="InterPro"/>
</dbReference>
<dbReference type="GO" id="GO:0006098">
    <property type="term" value="P:pentose-phosphate shunt"/>
    <property type="evidence" value="ECO:0007669"/>
    <property type="project" value="UniProtKB-UniRule"/>
</dbReference>
<dbReference type="CDD" id="cd00956">
    <property type="entry name" value="Transaldolase_FSA"/>
    <property type="match status" value="1"/>
</dbReference>
<dbReference type="FunFam" id="3.20.20.70:FF:000018">
    <property type="entry name" value="Probable transaldolase"/>
    <property type="match status" value="1"/>
</dbReference>
<dbReference type="Gene3D" id="3.20.20.70">
    <property type="entry name" value="Aldolase class I"/>
    <property type="match status" value="1"/>
</dbReference>
<dbReference type="HAMAP" id="MF_00494">
    <property type="entry name" value="Transaldolase_3b"/>
    <property type="match status" value="1"/>
</dbReference>
<dbReference type="InterPro" id="IPR013785">
    <property type="entry name" value="Aldolase_TIM"/>
</dbReference>
<dbReference type="InterPro" id="IPR001585">
    <property type="entry name" value="TAL/FSA"/>
</dbReference>
<dbReference type="InterPro" id="IPR022999">
    <property type="entry name" value="Transaldolase_3B"/>
</dbReference>
<dbReference type="InterPro" id="IPR004731">
    <property type="entry name" value="Transaldolase_3B/F6P_aldolase"/>
</dbReference>
<dbReference type="InterPro" id="IPR018225">
    <property type="entry name" value="Transaldolase_AS"/>
</dbReference>
<dbReference type="InterPro" id="IPR033919">
    <property type="entry name" value="TSA/FSA_arc/bac"/>
</dbReference>
<dbReference type="NCBIfam" id="TIGR00875">
    <property type="entry name" value="fsa_talC_mipB"/>
    <property type="match status" value="1"/>
</dbReference>
<dbReference type="PANTHER" id="PTHR10683:SF40">
    <property type="entry name" value="FRUCTOSE-6-PHOSPHATE ALDOLASE 1-RELATED"/>
    <property type="match status" value="1"/>
</dbReference>
<dbReference type="PANTHER" id="PTHR10683">
    <property type="entry name" value="TRANSALDOLASE"/>
    <property type="match status" value="1"/>
</dbReference>
<dbReference type="Pfam" id="PF00923">
    <property type="entry name" value="TAL_FSA"/>
    <property type="match status" value="1"/>
</dbReference>
<dbReference type="SUPFAM" id="SSF51569">
    <property type="entry name" value="Aldolase"/>
    <property type="match status" value="1"/>
</dbReference>
<dbReference type="PROSITE" id="PS01054">
    <property type="entry name" value="TRANSALDOLASE_1"/>
    <property type="match status" value="1"/>
</dbReference>
<dbReference type="PROSITE" id="PS00958">
    <property type="entry name" value="TRANSALDOLASE_2"/>
    <property type="match status" value="1"/>
</dbReference>
<gene>
    <name type="primary">tal</name>
    <name type="ordered locus">TM_0295</name>
</gene>
<sequence length="218" mass="24213">MKIFLDTANLEEIKKGVEWGIVDGVTTNPTLISKEGAEFKQRVKEICDLVKGPVSAEVVSLDYEGMVREARELAQISEYVVIKIPMTPDGIKAVKTLSAEGIKTNVTLVFSPAQAILAAKAGATYVSPFVGRMDDLSNDGMRMLGEIVEIYNNYGFETEIIAASIRHPMHVVEAALMGVDIVTMPFAVLEKLFKHPMTDLGIERFMEDWKKYLENLKK</sequence>
<organism>
    <name type="scientific">Thermotoga maritima (strain ATCC 43589 / DSM 3109 / JCM 10099 / NBRC 100826 / MSB8)</name>
    <dbReference type="NCBI Taxonomy" id="243274"/>
    <lineage>
        <taxon>Bacteria</taxon>
        <taxon>Thermotogati</taxon>
        <taxon>Thermotogota</taxon>
        <taxon>Thermotogae</taxon>
        <taxon>Thermotogales</taxon>
        <taxon>Thermotogaceae</taxon>
        <taxon>Thermotoga</taxon>
    </lineage>
</organism>
<proteinExistence type="evidence at protein level"/>
<accession>Q9WYD1</accession>
<name>TAL_THEMA</name>